<evidence type="ECO:0000256" key="1">
    <source>
        <dbReference type="SAM" id="MobiDB-lite"/>
    </source>
</evidence>
<evidence type="ECO:0000269" key="2">
    <source>
    </source>
</evidence>
<accession>Q8N9R6</accession>
<accession>A8MSL9</accession>
<accession>D3DTT2</accession>
<accession>Q8IZ19</accession>
<comment type="interaction">
    <interactant intactId="EBI-10176618">
        <id>Q8N9R6</id>
    </interactant>
    <interactant intactId="EBI-2107455">
        <id>Q08AM6</id>
        <label>VAC14</label>
    </interactant>
    <organismsDiffer>false</organismsDiffer>
    <experiments>7</experiments>
</comment>
<comment type="tissue specificity">
    <text evidence="2">Expressed in fetal skeletal muscle and kidney.</text>
</comment>
<keyword id="KW-1185">Reference proteome</keyword>
<organism>
    <name type="scientific">Homo sapiens</name>
    <name type="common">Human</name>
    <dbReference type="NCBI Taxonomy" id="9606"/>
    <lineage>
        <taxon>Eukaryota</taxon>
        <taxon>Metazoa</taxon>
        <taxon>Chordata</taxon>
        <taxon>Craniata</taxon>
        <taxon>Vertebrata</taxon>
        <taxon>Euteleostomi</taxon>
        <taxon>Mammalia</taxon>
        <taxon>Eutheria</taxon>
        <taxon>Euarchontoglires</taxon>
        <taxon>Primates</taxon>
        <taxon>Haplorrhini</taxon>
        <taxon>Catarrhini</taxon>
        <taxon>Hominidae</taxon>
        <taxon>Homo</taxon>
    </lineage>
</organism>
<name>CDRT4_HUMAN</name>
<feature type="chain" id="PRO_0000314903" description="CMT1A duplicated region transcript 4 protein">
    <location>
        <begin position="1"/>
        <end position="152"/>
    </location>
</feature>
<feature type="region of interest" description="Disordered" evidence="1">
    <location>
        <begin position="1"/>
        <end position="23"/>
    </location>
</feature>
<feature type="region of interest" description="Disordered" evidence="1">
    <location>
        <begin position="60"/>
        <end position="89"/>
    </location>
</feature>
<feature type="compositionally biased region" description="Basic and acidic residues" evidence="1">
    <location>
        <begin position="1"/>
        <end position="11"/>
    </location>
</feature>
<feature type="compositionally biased region" description="Polar residues" evidence="1">
    <location>
        <begin position="65"/>
        <end position="74"/>
    </location>
</feature>
<feature type="sequence variant" id="VAR_038119" description="In dbSNP:rs3744332.">
    <original>V</original>
    <variation>I</variation>
    <location>
        <position position="73"/>
    </location>
</feature>
<feature type="sequence variant" id="VAR_038120" description="In dbSNP:rs2954759.">
    <original>H</original>
    <variation>Q</variation>
    <location>
        <position position="122"/>
    </location>
</feature>
<sequence length="152" mass="17643">MDARRMKKEEGLTENTGLPRKLLEKHDPWPAYVTYTSQTVKRLIEKSKTRELECMRALEERPWASRQNKPSSVIQPKRRKSSKSSGKAVFRDTLSESTLSMWGAYSVLAMAPTMIPEPTHLHADSRDCPTENYNKIIFARKPMMRMLPTVRY</sequence>
<protein>
    <recommendedName>
        <fullName>CMT1A duplicated region transcript 4 protein</fullName>
    </recommendedName>
</protein>
<proteinExistence type="evidence at protein level"/>
<gene>
    <name type="primary">CDRT4</name>
</gene>
<reference key="1">
    <citation type="journal article" date="2004" name="Nat. Genet.">
        <title>Complete sequencing and characterization of 21,243 full-length human cDNAs.</title>
        <authorList>
            <person name="Ota T."/>
            <person name="Suzuki Y."/>
            <person name="Nishikawa T."/>
            <person name="Otsuki T."/>
            <person name="Sugiyama T."/>
            <person name="Irie R."/>
            <person name="Wakamatsu A."/>
            <person name="Hayashi K."/>
            <person name="Sato H."/>
            <person name="Nagai K."/>
            <person name="Kimura K."/>
            <person name="Makita H."/>
            <person name="Sekine M."/>
            <person name="Obayashi M."/>
            <person name="Nishi T."/>
            <person name="Shibahara T."/>
            <person name="Tanaka T."/>
            <person name="Ishii S."/>
            <person name="Yamamoto J."/>
            <person name="Saito K."/>
            <person name="Kawai Y."/>
            <person name="Isono Y."/>
            <person name="Nakamura Y."/>
            <person name="Nagahari K."/>
            <person name="Murakami K."/>
            <person name="Yasuda T."/>
            <person name="Iwayanagi T."/>
            <person name="Wagatsuma M."/>
            <person name="Shiratori A."/>
            <person name="Sudo H."/>
            <person name="Hosoiri T."/>
            <person name="Kaku Y."/>
            <person name="Kodaira H."/>
            <person name="Kondo H."/>
            <person name="Sugawara M."/>
            <person name="Takahashi M."/>
            <person name="Kanda K."/>
            <person name="Yokoi T."/>
            <person name="Furuya T."/>
            <person name="Kikkawa E."/>
            <person name="Omura Y."/>
            <person name="Abe K."/>
            <person name="Kamihara K."/>
            <person name="Katsuta N."/>
            <person name="Sato K."/>
            <person name="Tanikawa M."/>
            <person name="Yamazaki M."/>
            <person name="Ninomiya K."/>
            <person name="Ishibashi T."/>
            <person name="Yamashita H."/>
            <person name="Murakawa K."/>
            <person name="Fujimori K."/>
            <person name="Tanai H."/>
            <person name="Kimata M."/>
            <person name="Watanabe M."/>
            <person name="Hiraoka S."/>
            <person name="Chiba Y."/>
            <person name="Ishida S."/>
            <person name="Ono Y."/>
            <person name="Takiguchi S."/>
            <person name="Watanabe S."/>
            <person name="Yosida M."/>
            <person name="Hotuta T."/>
            <person name="Kusano J."/>
            <person name="Kanehori K."/>
            <person name="Takahashi-Fujii A."/>
            <person name="Hara H."/>
            <person name="Tanase T.-O."/>
            <person name="Nomura Y."/>
            <person name="Togiya S."/>
            <person name="Komai F."/>
            <person name="Hara R."/>
            <person name="Takeuchi K."/>
            <person name="Arita M."/>
            <person name="Imose N."/>
            <person name="Musashino K."/>
            <person name="Yuuki H."/>
            <person name="Oshima A."/>
            <person name="Sasaki N."/>
            <person name="Aotsuka S."/>
            <person name="Yoshikawa Y."/>
            <person name="Matsunawa H."/>
            <person name="Ichihara T."/>
            <person name="Shiohata N."/>
            <person name="Sano S."/>
            <person name="Moriya S."/>
            <person name="Momiyama H."/>
            <person name="Satoh N."/>
            <person name="Takami S."/>
            <person name="Terashima Y."/>
            <person name="Suzuki O."/>
            <person name="Nakagawa S."/>
            <person name="Senoh A."/>
            <person name="Mizoguchi H."/>
            <person name="Goto Y."/>
            <person name="Shimizu F."/>
            <person name="Wakebe H."/>
            <person name="Hishigaki H."/>
            <person name="Watanabe T."/>
            <person name="Sugiyama A."/>
            <person name="Takemoto M."/>
            <person name="Kawakami B."/>
            <person name="Yamazaki M."/>
            <person name="Watanabe K."/>
            <person name="Kumagai A."/>
            <person name="Itakura S."/>
            <person name="Fukuzumi Y."/>
            <person name="Fujimori Y."/>
            <person name="Komiyama M."/>
            <person name="Tashiro H."/>
            <person name="Tanigami A."/>
            <person name="Fujiwara T."/>
            <person name="Ono T."/>
            <person name="Yamada K."/>
            <person name="Fujii Y."/>
            <person name="Ozaki K."/>
            <person name="Hirao M."/>
            <person name="Ohmori Y."/>
            <person name="Kawabata A."/>
            <person name="Hikiji T."/>
            <person name="Kobatake N."/>
            <person name="Inagaki H."/>
            <person name="Ikema Y."/>
            <person name="Okamoto S."/>
            <person name="Okitani R."/>
            <person name="Kawakami T."/>
            <person name="Noguchi S."/>
            <person name="Itoh T."/>
            <person name="Shigeta K."/>
            <person name="Senba T."/>
            <person name="Matsumura K."/>
            <person name="Nakajima Y."/>
            <person name="Mizuno T."/>
            <person name="Morinaga M."/>
            <person name="Sasaki M."/>
            <person name="Togashi T."/>
            <person name="Oyama M."/>
            <person name="Hata H."/>
            <person name="Watanabe M."/>
            <person name="Komatsu T."/>
            <person name="Mizushima-Sugano J."/>
            <person name="Satoh T."/>
            <person name="Shirai Y."/>
            <person name="Takahashi Y."/>
            <person name="Nakagawa K."/>
            <person name="Okumura K."/>
            <person name="Nagase T."/>
            <person name="Nomura N."/>
            <person name="Kikuchi H."/>
            <person name="Masuho Y."/>
            <person name="Yamashita R."/>
            <person name="Nakai K."/>
            <person name="Yada T."/>
            <person name="Nakamura Y."/>
            <person name="Ohara O."/>
            <person name="Isogai T."/>
            <person name="Sugano S."/>
        </authorList>
    </citation>
    <scope>NUCLEOTIDE SEQUENCE [LARGE SCALE MRNA]</scope>
    <source>
        <tissue>Uterus</tissue>
    </source>
</reference>
<reference key="2">
    <citation type="journal article" date="2006" name="Nature">
        <title>DNA sequence of human chromosome 17 and analysis of rearrangement in the human lineage.</title>
        <authorList>
            <person name="Zody M.C."/>
            <person name="Garber M."/>
            <person name="Adams D.J."/>
            <person name="Sharpe T."/>
            <person name="Harrow J."/>
            <person name="Lupski J.R."/>
            <person name="Nicholson C."/>
            <person name="Searle S.M."/>
            <person name="Wilming L."/>
            <person name="Young S.K."/>
            <person name="Abouelleil A."/>
            <person name="Allen N.R."/>
            <person name="Bi W."/>
            <person name="Bloom T."/>
            <person name="Borowsky M.L."/>
            <person name="Bugalter B.E."/>
            <person name="Butler J."/>
            <person name="Chang J.L."/>
            <person name="Chen C.-K."/>
            <person name="Cook A."/>
            <person name="Corum B."/>
            <person name="Cuomo C.A."/>
            <person name="de Jong P.J."/>
            <person name="DeCaprio D."/>
            <person name="Dewar K."/>
            <person name="FitzGerald M."/>
            <person name="Gilbert J."/>
            <person name="Gibson R."/>
            <person name="Gnerre S."/>
            <person name="Goldstein S."/>
            <person name="Grafham D.V."/>
            <person name="Grocock R."/>
            <person name="Hafez N."/>
            <person name="Hagopian D.S."/>
            <person name="Hart E."/>
            <person name="Norman C.H."/>
            <person name="Humphray S."/>
            <person name="Jaffe D.B."/>
            <person name="Jones M."/>
            <person name="Kamal M."/>
            <person name="Khodiyar V.K."/>
            <person name="LaButti K."/>
            <person name="Laird G."/>
            <person name="Lehoczky J."/>
            <person name="Liu X."/>
            <person name="Lokyitsang T."/>
            <person name="Loveland J."/>
            <person name="Lui A."/>
            <person name="Macdonald P."/>
            <person name="Major J.E."/>
            <person name="Matthews L."/>
            <person name="Mauceli E."/>
            <person name="McCarroll S.A."/>
            <person name="Mihalev A.H."/>
            <person name="Mudge J."/>
            <person name="Nguyen C."/>
            <person name="Nicol R."/>
            <person name="O'Leary S.B."/>
            <person name="Osoegawa K."/>
            <person name="Schwartz D.C."/>
            <person name="Shaw-Smith C."/>
            <person name="Stankiewicz P."/>
            <person name="Steward C."/>
            <person name="Swarbreck D."/>
            <person name="Venkataraman V."/>
            <person name="Whittaker C.A."/>
            <person name="Yang X."/>
            <person name="Zimmer A.R."/>
            <person name="Bradley A."/>
            <person name="Hubbard T."/>
            <person name="Birren B.W."/>
            <person name="Rogers J."/>
            <person name="Lander E.S."/>
            <person name="Nusbaum C."/>
        </authorList>
    </citation>
    <scope>NUCLEOTIDE SEQUENCE [LARGE SCALE GENOMIC DNA]</scope>
</reference>
<reference key="3">
    <citation type="submission" date="2005-09" db="EMBL/GenBank/DDBJ databases">
        <authorList>
            <person name="Mural R.J."/>
            <person name="Istrail S."/>
            <person name="Sutton G.G."/>
            <person name="Florea L."/>
            <person name="Halpern A.L."/>
            <person name="Mobarry C.M."/>
            <person name="Lippert R."/>
            <person name="Walenz B."/>
            <person name="Shatkay H."/>
            <person name="Dew I."/>
            <person name="Miller J.R."/>
            <person name="Flanigan M.J."/>
            <person name="Edwards N.J."/>
            <person name="Bolanos R."/>
            <person name="Fasulo D."/>
            <person name="Halldorsson B.V."/>
            <person name="Hannenhalli S."/>
            <person name="Turner R."/>
            <person name="Yooseph S."/>
            <person name="Lu F."/>
            <person name="Nusskern D.R."/>
            <person name="Shue B.C."/>
            <person name="Zheng X.H."/>
            <person name="Zhong F."/>
            <person name="Delcher A.L."/>
            <person name="Huson D.H."/>
            <person name="Kravitz S.A."/>
            <person name="Mouchard L."/>
            <person name="Reinert K."/>
            <person name="Remington K.A."/>
            <person name="Clark A.G."/>
            <person name="Waterman M.S."/>
            <person name="Eichler E.E."/>
            <person name="Adams M.D."/>
            <person name="Hunkapiller M.W."/>
            <person name="Myers E.W."/>
            <person name="Venter J.C."/>
        </authorList>
    </citation>
    <scope>NUCLEOTIDE SEQUENCE [LARGE SCALE GENOMIC DNA]</scope>
</reference>
<reference key="4">
    <citation type="journal article" date="2004" name="Genome Res.">
        <title>The status, quality, and expansion of the NIH full-length cDNA project: the Mammalian Gene Collection (MGC).</title>
        <authorList>
            <consortium name="The MGC Project Team"/>
        </authorList>
    </citation>
    <scope>NUCLEOTIDE SEQUENCE [LARGE SCALE MRNA]</scope>
    <source>
        <tissue>Testis</tissue>
    </source>
</reference>
<reference key="5">
    <citation type="journal article" date="2001" name="Genome Res.">
        <title>The 1.4-Mb CMT1A duplication/HNPP deletion genomic region reveals unique genome architectural features and provides insights into the recent evolution of new genes.</title>
        <authorList>
            <person name="Inoue K."/>
            <person name="Dewar K."/>
            <person name="Katsanis N."/>
            <person name="Reiter L.T."/>
            <person name="Lander E.S."/>
            <person name="Devon K.L."/>
            <person name="Wyman D.W."/>
            <person name="Lupski J.R."/>
            <person name="Birren B."/>
        </authorList>
    </citation>
    <scope>TISSUE SPECIFICITY</scope>
</reference>
<dbReference type="EMBL" id="AK093993">
    <property type="protein sequence ID" value="BAC04263.1"/>
    <property type="molecule type" value="mRNA"/>
</dbReference>
<dbReference type="EMBL" id="AC005517">
    <property type="status" value="NOT_ANNOTATED_CDS"/>
    <property type="molecule type" value="Genomic_DNA"/>
</dbReference>
<dbReference type="EMBL" id="KF573687">
    <property type="status" value="NOT_ANNOTATED_CDS"/>
    <property type="molecule type" value="Genomic_DNA"/>
</dbReference>
<dbReference type="EMBL" id="CH471108">
    <property type="protein sequence ID" value="EAW89938.1"/>
    <property type="molecule type" value="Genomic_DNA"/>
</dbReference>
<dbReference type="EMBL" id="CH471108">
    <property type="protein sequence ID" value="EAW89941.1"/>
    <property type="molecule type" value="Genomic_DNA"/>
</dbReference>
<dbReference type="EMBL" id="BC029542">
    <property type="protein sequence ID" value="AAH29542.2"/>
    <property type="molecule type" value="mRNA"/>
</dbReference>
<dbReference type="CCDS" id="CCDS73995.1"/>
<dbReference type="RefSeq" id="NP_001191406.1">
    <property type="nucleotide sequence ID" value="NM_001204477.2"/>
</dbReference>
<dbReference type="SMR" id="Q8N9R6"/>
<dbReference type="BioGRID" id="129739">
    <property type="interactions" value="2"/>
</dbReference>
<dbReference type="IntAct" id="Q8N9R6">
    <property type="interactions" value="1"/>
</dbReference>
<dbReference type="STRING" id="9606.ENSP00000482523"/>
<dbReference type="GlyGen" id="Q8N9R6">
    <property type="glycosylation" value="1 site, 1 O-linked glycan (1 site)"/>
</dbReference>
<dbReference type="BioMuta" id="CDRT4"/>
<dbReference type="DMDM" id="296434438"/>
<dbReference type="jPOST" id="Q8N9R6"/>
<dbReference type="MassIVE" id="Q8N9R6"/>
<dbReference type="PaxDb" id="9606-ENSP00000482523"/>
<dbReference type="PeptideAtlas" id="Q8N9R6"/>
<dbReference type="ProteomicsDB" id="12761"/>
<dbReference type="ProteomicsDB" id="72575"/>
<dbReference type="Antibodypedia" id="34822">
    <property type="antibodies" value="75 antibodies from 15 providers"/>
</dbReference>
<dbReference type="DNASU" id="284040"/>
<dbReference type="Ensembl" id="ENST00000619038.5">
    <property type="protein sequence ID" value="ENSP00000482523.1"/>
    <property type="gene ID" value="ENSG00000239704.12"/>
</dbReference>
<dbReference type="GeneID" id="284040"/>
<dbReference type="KEGG" id="hsa:284040"/>
<dbReference type="MANE-Select" id="ENST00000619038.5">
    <property type="protein sequence ID" value="ENSP00000482523.1"/>
    <property type="RefSeq nucleotide sequence ID" value="NM_001204477.2"/>
    <property type="RefSeq protein sequence ID" value="NP_001191406.1"/>
</dbReference>
<dbReference type="UCSC" id="uc032eur.1">
    <property type="organism name" value="human"/>
</dbReference>
<dbReference type="AGR" id="HGNC:14383"/>
<dbReference type="CTD" id="284040"/>
<dbReference type="GeneCards" id="CDRT4"/>
<dbReference type="HGNC" id="HGNC:14383">
    <property type="gene designation" value="CDRT4"/>
</dbReference>
<dbReference type="HPA" id="ENSG00000239704">
    <property type="expression patterns" value="Low tissue specificity"/>
</dbReference>
<dbReference type="neXtProt" id="NX_Q8N9R6"/>
<dbReference type="OpenTargets" id="ENSG00000239704"/>
<dbReference type="PharmGKB" id="PA26340"/>
<dbReference type="VEuPathDB" id="HostDB:ENSG00000239704"/>
<dbReference type="eggNOG" id="ENOG502SXCX">
    <property type="taxonomic scope" value="Eukaryota"/>
</dbReference>
<dbReference type="GeneTree" id="ENSGT00390000005396"/>
<dbReference type="HOGENOM" id="CLU_128820_0_0_1"/>
<dbReference type="InParanoid" id="Q8N9R6"/>
<dbReference type="OMA" id="PTADYNK"/>
<dbReference type="PAN-GO" id="Q8N9R6">
    <property type="GO annotations" value="0 GO annotations based on evolutionary models"/>
</dbReference>
<dbReference type="PhylomeDB" id="Q8N9R6"/>
<dbReference type="TreeFam" id="TF338166"/>
<dbReference type="PathwayCommons" id="Q8N9R6"/>
<dbReference type="SignaLink" id="Q8N9R6"/>
<dbReference type="BioGRID-ORCS" id="284040">
    <property type="hits" value="2 hits in 233 CRISPR screens"/>
</dbReference>
<dbReference type="GenomeRNAi" id="284040"/>
<dbReference type="Pharos" id="Q8N9R6">
    <property type="development level" value="Tdark"/>
</dbReference>
<dbReference type="PRO" id="PR:Q8N9R6"/>
<dbReference type="Proteomes" id="UP000005640">
    <property type="component" value="Chromosome 17"/>
</dbReference>
<dbReference type="RNAct" id="Q8N9R6">
    <property type="molecule type" value="protein"/>
</dbReference>
<dbReference type="Bgee" id="ENSG00000239704">
    <property type="expression patterns" value="Expressed in right uterine tube and 93 other cell types or tissues"/>
</dbReference>
<dbReference type="ExpressionAtlas" id="Q8N9R6">
    <property type="expression patterns" value="baseline and differential"/>
</dbReference>
<dbReference type="InterPro" id="IPR029185">
    <property type="entry name" value="CDRT4"/>
</dbReference>
<dbReference type="PANTHER" id="PTHR37885">
    <property type="entry name" value="CMT1A DUPLICATED REGION TRANSCRIPT 4 PROTEIN"/>
    <property type="match status" value="1"/>
</dbReference>
<dbReference type="PANTHER" id="PTHR37885:SF1">
    <property type="entry name" value="CMT1A DUPLICATED REGION TRANSCRIPT 4 PROTEIN"/>
    <property type="match status" value="1"/>
</dbReference>
<dbReference type="Pfam" id="PF15213">
    <property type="entry name" value="CDRT4"/>
    <property type="match status" value="1"/>
</dbReference>